<feature type="chain" id="PRO_1000063246" description="Putative transport protein ASA_0825">
    <location>
        <begin position="1"/>
        <end position="553"/>
    </location>
</feature>
<feature type="transmembrane region" description="Helical" evidence="1">
    <location>
        <begin position="4"/>
        <end position="24"/>
    </location>
</feature>
<feature type="transmembrane region" description="Helical" evidence="1">
    <location>
        <begin position="29"/>
        <end position="49"/>
    </location>
</feature>
<feature type="transmembrane region" description="Helical" evidence="1">
    <location>
        <begin position="65"/>
        <end position="85"/>
    </location>
</feature>
<feature type="transmembrane region" description="Helical" evidence="1">
    <location>
        <begin position="95"/>
        <end position="115"/>
    </location>
</feature>
<feature type="transmembrane region" description="Helical" evidence="1">
    <location>
        <begin position="158"/>
        <end position="178"/>
    </location>
</feature>
<feature type="transmembrane region" description="Helical" evidence="1">
    <location>
        <begin position="371"/>
        <end position="391"/>
    </location>
</feature>
<feature type="transmembrane region" description="Helical" evidence="1">
    <location>
        <begin position="403"/>
        <end position="425"/>
    </location>
</feature>
<feature type="transmembrane region" description="Helical" evidence="1">
    <location>
        <begin position="439"/>
        <end position="459"/>
    </location>
</feature>
<feature type="transmembrane region" description="Helical" evidence="1">
    <location>
        <begin position="465"/>
        <end position="485"/>
    </location>
</feature>
<feature type="transmembrane region" description="Helical" evidence="1">
    <location>
        <begin position="493"/>
        <end position="513"/>
    </location>
</feature>
<feature type="transmembrane region" description="Helical" evidence="1">
    <location>
        <begin position="533"/>
        <end position="553"/>
    </location>
</feature>
<feature type="domain" description="RCK C-terminal 1" evidence="1">
    <location>
        <begin position="191"/>
        <end position="276"/>
    </location>
</feature>
<feature type="domain" description="RCK C-terminal 2" evidence="1">
    <location>
        <begin position="279"/>
        <end position="361"/>
    </location>
</feature>
<accession>A4SJA2</accession>
<name>Y825_AERS4</name>
<sequence length="553" mass="59043">MSDIALSISMLSLVAVLGLWLGNWRVYGVGLGIGGVLFGGIIVGHFAGVSDLALDEQTLHFIQEFGLILFVYTIGIQVGPGFFSSLRSSGLKLNGFAALLVILGCVVAAGLHQLFDVPLPVILGVFSGAVTNTPSLGAGQQILAELGADPGSTGLMGMGYAVAYPFGICGILLTMWLVRLFFRIKIDEEADLFEQHAGKTKESLQTINIAVRNPNMHGLMLCEIPSLDESDVICSRLKRGEELMVPRSDSRIELGDLLHLVGERHALHKVLLVLGEEVETSLSTRGTDLRVERVVVTNEQVLGKKIRDLDIKQKYDVVISRLNRAGIELVPTSQTSLQFGDILNLVGRLDAIEAVTNVVGNVQQKLQQMQMLPVFIGIGLGVLLGSIPFYLPGFPAALKLGLAGGPLVVALILSRIGSIGKLYWFMPPSANLALREIGIVLFLAVVGFKSGAGFVDTLINGDGPAWMMYGMAITLIPLLVVGVLARLYGKMSYLTLCGLLAGSMTDPPALAFANGMHPTSGASALSYATVYPLVMFLRIISPQLLAILLWAGV</sequence>
<keyword id="KW-1003">Cell membrane</keyword>
<keyword id="KW-0472">Membrane</keyword>
<keyword id="KW-0677">Repeat</keyword>
<keyword id="KW-0812">Transmembrane</keyword>
<keyword id="KW-1133">Transmembrane helix</keyword>
<keyword id="KW-0813">Transport</keyword>
<proteinExistence type="inferred from homology"/>
<comment type="subcellular location">
    <subcellularLocation>
        <location evidence="1">Cell membrane</location>
        <topology evidence="1">Multi-pass membrane protein</topology>
    </subcellularLocation>
</comment>
<comment type="similarity">
    <text evidence="1">Belongs to the AAE transporter (TC 2.A.81) family. YidE subfamily.</text>
</comment>
<evidence type="ECO:0000255" key="1">
    <source>
        <dbReference type="HAMAP-Rule" id="MF_01016"/>
    </source>
</evidence>
<protein>
    <recommendedName>
        <fullName evidence="1">Putative transport protein ASA_0825</fullName>
    </recommendedName>
</protein>
<dbReference type="EMBL" id="CP000644">
    <property type="protein sequence ID" value="ABO88974.1"/>
    <property type="molecule type" value="Genomic_DNA"/>
</dbReference>
<dbReference type="RefSeq" id="WP_005318056.1">
    <property type="nucleotide sequence ID" value="NC_009348.1"/>
</dbReference>
<dbReference type="SMR" id="A4SJA2"/>
<dbReference type="STRING" id="29491.GCA_000820065_03829"/>
<dbReference type="KEGG" id="asa:ASA_0825"/>
<dbReference type="PATRIC" id="fig|382245.13.peg.823"/>
<dbReference type="eggNOG" id="COG0569">
    <property type="taxonomic scope" value="Bacteria"/>
</dbReference>
<dbReference type="eggNOG" id="COG2985">
    <property type="taxonomic scope" value="Bacteria"/>
</dbReference>
<dbReference type="HOGENOM" id="CLU_035023_3_1_6"/>
<dbReference type="Proteomes" id="UP000000225">
    <property type="component" value="Chromosome"/>
</dbReference>
<dbReference type="GO" id="GO:0005886">
    <property type="term" value="C:plasma membrane"/>
    <property type="evidence" value="ECO:0007669"/>
    <property type="project" value="UniProtKB-SubCell"/>
</dbReference>
<dbReference type="GO" id="GO:0008324">
    <property type="term" value="F:monoatomic cation transmembrane transporter activity"/>
    <property type="evidence" value="ECO:0007669"/>
    <property type="project" value="InterPro"/>
</dbReference>
<dbReference type="GO" id="GO:0006813">
    <property type="term" value="P:potassium ion transport"/>
    <property type="evidence" value="ECO:0007669"/>
    <property type="project" value="InterPro"/>
</dbReference>
<dbReference type="Gene3D" id="3.30.70.1450">
    <property type="entry name" value="Regulator of K+ conductance, C-terminal domain"/>
    <property type="match status" value="2"/>
</dbReference>
<dbReference type="HAMAP" id="MF_01016">
    <property type="entry name" value="YidE"/>
    <property type="match status" value="1"/>
</dbReference>
<dbReference type="InterPro" id="IPR050144">
    <property type="entry name" value="AAE_transporter"/>
</dbReference>
<dbReference type="InterPro" id="IPR006037">
    <property type="entry name" value="RCK_C"/>
</dbReference>
<dbReference type="InterPro" id="IPR036721">
    <property type="entry name" value="RCK_C_sf"/>
</dbReference>
<dbReference type="InterPro" id="IPR023018">
    <property type="entry name" value="Transpt_YidE_put"/>
</dbReference>
<dbReference type="InterPro" id="IPR006512">
    <property type="entry name" value="YidE_YbjL"/>
</dbReference>
<dbReference type="NCBIfam" id="NF003007">
    <property type="entry name" value="PRK03818.1"/>
    <property type="match status" value="1"/>
</dbReference>
<dbReference type="NCBIfam" id="TIGR01625">
    <property type="entry name" value="YidE_YbjL_dupl"/>
    <property type="match status" value="2"/>
</dbReference>
<dbReference type="PANTHER" id="PTHR30445">
    <property type="entry name" value="K(+)_H(+) ANTIPORTER SUBUNIT KHTT"/>
    <property type="match status" value="1"/>
</dbReference>
<dbReference type="PANTHER" id="PTHR30445:SF3">
    <property type="entry name" value="TRANSPORT PROTEIN YIDE-RELATED"/>
    <property type="match status" value="1"/>
</dbReference>
<dbReference type="Pfam" id="PF06826">
    <property type="entry name" value="Asp-Al_Ex"/>
    <property type="match status" value="2"/>
</dbReference>
<dbReference type="Pfam" id="PF02080">
    <property type="entry name" value="TrkA_C"/>
    <property type="match status" value="1"/>
</dbReference>
<dbReference type="SUPFAM" id="SSF116726">
    <property type="entry name" value="TrkA C-terminal domain-like"/>
    <property type="match status" value="2"/>
</dbReference>
<dbReference type="PROSITE" id="PS51202">
    <property type="entry name" value="RCK_C"/>
    <property type="match status" value="2"/>
</dbReference>
<gene>
    <name type="ordered locus">ASA_0825</name>
</gene>
<organism>
    <name type="scientific">Aeromonas salmonicida (strain A449)</name>
    <dbReference type="NCBI Taxonomy" id="382245"/>
    <lineage>
        <taxon>Bacteria</taxon>
        <taxon>Pseudomonadati</taxon>
        <taxon>Pseudomonadota</taxon>
        <taxon>Gammaproteobacteria</taxon>
        <taxon>Aeromonadales</taxon>
        <taxon>Aeromonadaceae</taxon>
        <taxon>Aeromonas</taxon>
    </lineage>
</organism>
<reference key="1">
    <citation type="journal article" date="2008" name="BMC Genomics">
        <title>The genome of Aeromonas salmonicida subsp. salmonicida A449: insights into the evolution of a fish pathogen.</title>
        <authorList>
            <person name="Reith M.E."/>
            <person name="Singh R.K."/>
            <person name="Curtis B."/>
            <person name="Boyd J.M."/>
            <person name="Bouevitch A."/>
            <person name="Kimball J."/>
            <person name="Munholland J."/>
            <person name="Murphy C."/>
            <person name="Sarty D."/>
            <person name="Williams J."/>
            <person name="Nash J.H."/>
            <person name="Johnson S.C."/>
            <person name="Brown L.L."/>
        </authorList>
    </citation>
    <scope>NUCLEOTIDE SEQUENCE [LARGE SCALE GENOMIC DNA]</scope>
    <source>
        <strain>A449</strain>
    </source>
</reference>